<dbReference type="EMBL" id="CP000024">
    <property type="protein sequence ID" value="AAV62019.1"/>
    <property type="molecule type" value="Genomic_DNA"/>
</dbReference>
<dbReference type="RefSeq" id="WP_002885483.1">
    <property type="nucleotide sequence ID" value="NC_006449.1"/>
</dbReference>
<dbReference type="SMR" id="Q5M158"/>
<dbReference type="GeneID" id="93791587"/>
<dbReference type="KEGG" id="stc:str0418"/>
<dbReference type="HOGENOM" id="CLU_095424_4_0_9"/>
<dbReference type="GO" id="GO:0022625">
    <property type="term" value="C:cytosolic large ribosomal subunit"/>
    <property type="evidence" value="ECO:0007669"/>
    <property type="project" value="TreeGrafter"/>
</dbReference>
<dbReference type="GO" id="GO:0003735">
    <property type="term" value="F:structural constituent of ribosome"/>
    <property type="evidence" value="ECO:0007669"/>
    <property type="project" value="InterPro"/>
</dbReference>
<dbReference type="GO" id="GO:0006412">
    <property type="term" value="P:translation"/>
    <property type="evidence" value="ECO:0007669"/>
    <property type="project" value="UniProtKB-UniRule"/>
</dbReference>
<dbReference type="FunFam" id="2.40.50.100:FF:000004">
    <property type="entry name" value="50S ribosomal protein L27"/>
    <property type="match status" value="1"/>
</dbReference>
<dbReference type="Gene3D" id="2.40.50.100">
    <property type="match status" value="1"/>
</dbReference>
<dbReference type="HAMAP" id="MF_00539">
    <property type="entry name" value="Ribosomal_bL27"/>
    <property type="match status" value="1"/>
</dbReference>
<dbReference type="InterPro" id="IPR001684">
    <property type="entry name" value="Ribosomal_bL27"/>
</dbReference>
<dbReference type="InterPro" id="IPR018261">
    <property type="entry name" value="Ribosomal_bL27_CS"/>
</dbReference>
<dbReference type="NCBIfam" id="TIGR00062">
    <property type="entry name" value="L27"/>
    <property type="match status" value="1"/>
</dbReference>
<dbReference type="PANTHER" id="PTHR15893:SF0">
    <property type="entry name" value="LARGE RIBOSOMAL SUBUNIT PROTEIN BL27M"/>
    <property type="match status" value="1"/>
</dbReference>
<dbReference type="PANTHER" id="PTHR15893">
    <property type="entry name" value="RIBOSOMAL PROTEIN L27"/>
    <property type="match status" value="1"/>
</dbReference>
<dbReference type="Pfam" id="PF01016">
    <property type="entry name" value="Ribosomal_L27"/>
    <property type="match status" value="1"/>
</dbReference>
<dbReference type="PRINTS" id="PR00063">
    <property type="entry name" value="RIBOSOMALL27"/>
</dbReference>
<dbReference type="SUPFAM" id="SSF110324">
    <property type="entry name" value="Ribosomal L27 protein-like"/>
    <property type="match status" value="1"/>
</dbReference>
<dbReference type="PROSITE" id="PS00831">
    <property type="entry name" value="RIBOSOMAL_L27"/>
    <property type="match status" value="1"/>
</dbReference>
<comment type="PTM">
    <text evidence="1">The N-terminus is cleaved by ribosomal processing cysteine protease Prp.</text>
</comment>
<comment type="similarity">
    <text evidence="2">Belongs to the bacterial ribosomal protein bL27 family.</text>
</comment>
<feature type="propeptide" id="PRO_0000459970" evidence="1">
    <location>
        <begin position="1"/>
        <end position="11"/>
    </location>
</feature>
<feature type="chain" id="PRO_0000181184" description="Large ribosomal subunit protein bL27">
    <location>
        <begin position="12"/>
        <end position="96"/>
    </location>
</feature>
<feature type="region of interest" description="Disordered" evidence="3">
    <location>
        <begin position="13"/>
        <end position="36"/>
    </location>
</feature>
<gene>
    <name evidence="2" type="primary">rpmA</name>
    <name type="ordered locus">str0418</name>
</gene>
<protein>
    <recommendedName>
        <fullName evidence="2">Large ribosomal subunit protein bL27</fullName>
    </recommendedName>
    <alternativeName>
        <fullName evidence="4">50S ribosomal protein L27</fullName>
    </alternativeName>
</protein>
<name>RL27_STRT1</name>
<reference key="1">
    <citation type="journal article" date="2004" name="Nat. Biotechnol.">
        <title>Complete sequence and comparative genome analysis of the dairy bacterium Streptococcus thermophilus.</title>
        <authorList>
            <person name="Bolotin A."/>
            <person name="Quinquis B."/>
            <person name="Renault P."/>
            <person name="Sorokin A."/>
            <person name="Ehrlich S.D."/>
            <person name="Kulakauskas S."/>
            <person name="Lapidus A."/>
            <person name="Goltsman E."/>
            <person name="Mazur M."/>
            <person name="Pusch G.D."/>
            <person name="Fonstein M."/>
            <person name="Overbeek R."/>
            <person name="Kyprides N."/>
            <person name="Purnelle B."/>
            <person name="Prozzi D."/>
            <person name="Ngui K."/>
            <person name="Masuy D."/>
            <person name="Hancy F."/>
            <person name="Burteau S."/>
            <person name="Boutry M."/>
            <person name="Delcour J."/>
            <person name="Goffeau A."/>
            <person name="Hols P."/>
        </authorList>
    </citation>
    <scope>NUCLEOTIDE SEQUENCE [LARGE SCALE GENOMIC DNA]</scope>
    <source>
        <strain>CNRZ 1066</strain>
    </source>
</reference>
<organism>
    <name type="scientific">Streptococcus thermophilus (strain CNRZ 1066)</name>
    <dbReference type="NCBI Taxonomy" id="299768"/>
    <lineage>
        <taxon>Bacteria</taxon>
        <taxon>Bacillati</taxon>
        <taxon>Bacillota</taxon>
        <taxon>Bacilli</taxon>
        <taxon>Lactobacillales</taxon>
        <taxon>Streptococcaceae</taxon>
        <taxon>Streptococcus</taxon>
    </lineage>
</organism>
<proteinExistence type="inferred from homology"/>
<accession>Q5M158</accession>
<sequence>MLKTLENLQLFAHKKGGGSTSNGRDSQAKRLGAKAADGQTVSGGSILYRQRGTHIYPGVNVGRGGDDTLFAKVEGVVRFERKGRDKKQVSVYPVAK</sequence>
<keyword id="KW-0687">Ribonucleoprotein</keyword>
<keyword id="KW-0689">Ribosomal protein</keyword>
<evidence type="ECO:0000250" key="1">
    <source>
        <dbReference type="UniProtKB" id="Q2FXT0"/>
    </source>
</evidence>
<evidence type="ECO:0000255" key="2">
    <source>
        <dbReference type="HAMAP-Rule" id="MF_00539"/>
    </source>
</evidence>
<evidence type="ECO:0000256" key="3">
    <source>
        <dbReference type="SAM" id="MobiDB-lite"/>
    </source>
</evidence>
<evidence type="ECO:0000305" key="4"/>